<gene>
    <name evidence="2" type="primary">rpsL</name>
    <name type="ordered locus">Pnec_0045</name>
</gene>
<sequence>MPTINQLIRKPRARLTVKSKSPAMQNSPQRRGVCTRVYTTTPKKPNSALRKVAKVRLTNGFEVISYIGGEGHNLQEHSVVLIRGGRVKDLPGVRYHIVRGSLDLQGVKDRKQARSKYGAKRAKKAA</sequence>
<reference key="1">
    <citation type="journal article" date="2013" name="Proc. Natl. Acad. Sci. U.S.A.">
        <title>Polynucleobacter necessarius, a model for genome reduction in both free-living and symbiotic bacteria.</title>
        <authorList>
            <person name="Boscaro V."/>
            <person name="Felletti M."/>
            <person name="Vannini C."/>
            <person name="Ackerman M.S."/>
            <person name="Chain P.S."/>
            <person name="Malfatti S."/>
            <person name="Vergez L.M."/>
            <person name="Shin M."/>
            <person name="Doak T.G."/>
            <person name="Lynch M."/>
            <person name="Petroni G."/>
        </authorList>
    </citation>
    <scope>NUCLEOTIDE SEQUENCE [LARGE SCALE GENOMIC DNA]</scope>
    <source>
        <strain>STIR1</strain>
    </source>
</reference>
<feature type="chain" id="PRO_1000194206" description="Small ribosomal subunit protein uS12">
    <location>
        <begin position="1"/>
        <end position="126"/>
    </location>
</feature>
<feature type="modified residue" description="3-methylthioaspartic acid" evidence="1">
    <location>
        <position position="89"/>
    </location>
</feature>
<dbReference type="EMBL" id="CP001010">
    <property type="protein sequence ID" value="ACB43373.1"/>
    <property type="molecule type" value="Genomic_DNA"/>
</dbReference>
<dbReference type="SMR" id="B1XSP6"/>
<dbReference type="STRING" id="452638.Pnec_0045"/>
<dbReference type="KEGG" id="pne:Pnec_0045"/>
<dbReference type="eggNOG" id="COG0048">
    <property type="taxonomic scope" value="Bacteria"/>
</dbReference>
<dbReference type="HOGENOM" id="CLU_104295_1_2_4"/>
<dbReference type="OrthoDB" id="9802366at2"/>
<dbReference type="GO" id="GO:0015935">
    <property type="term" value="C:small ribosomal subunit"/>
    <property type="evidence" value="ECO:0007669"/>
    <property type="project" value="InterPro"/>
</dbReference>
<dbReference type="GO" id="GO:0019843">
    <property type="term" value="F:rRNA binding"/>
    <property type="evidence" value="ECO:0007669"/>
    <property type="project" value="UniProtKB-UniRule"/>
</dbReference>
<dbReference type="GO" id="GO:0003735">
    <property type="term" value="F:structural constituent of ribosome"/>
    <property type="evidence" value="ECO:0007669"/>
    <property type="project" value="InterPro"/>
</dbReference>
<dbReference type="GO" id="GO:0000049">
    <property type="term" value="F:tRNA binding"/>
    <property type="evidence" value="ECO:0007669"/>
    <property type="project" value="UniProtKB-UniRule"/>
</dbReference>
<dbReference type="GO" id="GO:0006412">
    <property type="term" value="P:translation"/>
    <property type="evidence" value="ECO:0007669"/>
    <property type="project" value="UniProtKB-UniRule"/>
</dbReference>
<dbReference type="CDD" id="cd03368">
    <property type="entry name" value="Ribosomal_S12"/>
    <property type="match status" value="1"/>
</dbReference>
<dbReference type="FunFam" id="2.40.50.140:FF:000001">
    <property type="entry name" value="30S ribosomal protein S12"/>
    <property type="match status" value="1"/>
</dbReference>
<dbReference type="Gene3D" id="2.40.50.140">
    <property type="entry name" value="Nucleic acid-binding proteins"/>
    <property type="match status" value="1"/>
</dbReference>
<dbReference type="HAMAP" id="MF_00403_B">
    <property type="entry name" value="Ribosomal_uS12_B"/>
    <property type="match status" value="1"/>
</dbReference>
<dbReference type="InterPro" id="IPR012340">
    <property type="entry name" value="NA-bd_OB-fold"/>
</dbReference>
<dbReference type="InterPro" id="IPR006032">
    <property type="entry name" value="Ribosomal_uS12"/>
</dbReference>
<dbReference type="InterPro" id="IPR005679">
    <property type="entry name" value="Ribosomal_uS12_bac"/>
</dbReference>
<dbReference type="NCBIfam" id="TIGR00981">
    <property type="entry name" value="rpsL_bact"/>
    <property type="match status" value="1"/>
</dbReference>
<dbReference type="PANTHER" id="PTHR11652">
    <property type="entry name" value="30S RIBOSOMAL PROTEIN S12 FAMILY MEMBER"/>
    <property type="match status" value="1"/>
</dbReference>
<dbReference type="Pfam" id="PF00164">
    <property type="entry name" value="Ribosom_S12_S23"/>
    <property type="match status" value="1"/>
</dbReference>
<dbReference type="PIRSF" id="PIRSF002133">
    <property type="entry name" value="Ribosomal_S12/S23"/>
    <property type="match status" value="1"/>
</dbReference>
<dbReference type="PRINTS" id="PR01034">
    <property type="entry name" value="RIBOSOMALS12"/>
</dbReference>
<dbReference type="SUPFAM" id="SSF50249">
    <property type="entry name" value="Nucleic acid-binding proteins"/>
    <property type="match status" value="1"/>
</dbReference>
<dbReference type="PROSITE" id="PS00055">
    <property type="entry name" value="RIBOSOMAL_S12"/>
    <property type="match status" value="1"/>
</dbReference>
<name>RS12_POLNS</name>
<accession>B1XSP6</accession>
<proteinExistence type="inferred from homology"/>
<evidence type="ECO:0000250" key="1"/>
<evidence type="ECO:0000255" key="2">
    <source>
        <dbReference type="HAMAP-Rule" id="MF_00403"/>
    </source>
</evidence>
<evidence type="ECO:0000305" key="3"/>
<protein>
    <recommendedName>
        <fullName evidence="2">Small ribosomal subunit protein uS12</fullName>
    </recommendedName>
    <alternativeName>
        <fullName evidence="3">30S ribosomal protein S12</fullName>
    </alternativeName>
</protein>
<organism>
    <name type="scientific">Polynucleobacter necessarius subsp. necessarius (strain STIR1)</name>
    <dbReference type="NCBI Taxonomy" id="452638"/>
    <lineage>
        <taxon>Bacteria</taxon>
        <taxon>Pseudomonadati</taxon>
        <taxon>Pseudomonadota</taxon>
        <taxon>Betaproteobacteria</taxon>
        <taxon>Burkholderiales</taxon>
        <taxon>Burkholderiaceae</taxon>
        <taxon>Polynucleobacter</taxon>
    </lineage>
</organism>
<keyword id="KW-0488">Methylation</keyword>
<keyword id="KW-0687">Ribonucleoprotein</keyword>
<keyword id="KW-0689">Ribosomal protein</keyword>
<keyword id="KW-0694">RNA-binding</keyword>
<keyword id="KW-0699">rRNA-binding</keyword>
<keyword id="KW-0820">tRNA-binding</keyword>
<comment type="function">
    <text evidence="2">With S4 and S5 plays an important role in translational accuracy.</text>
</comment>
<comment type="function">
    <text evidence="2">Interacts with and stabilizes bases of the 16S rRNA that are involved in tRNA selection in the A site and with the mRNA backbone. Located at the interface of the 30S and 50S subunits, it traverses the body of the 30S subunit contacting proteins on the other side and probably holding the rRNA structure together. The combined cluster of proteins S8, S12 and S17 appears to hold together the shoulder and platform of the 30S subunit.</text>
</comment>
<comment type="subunit">
    <text evidence="2">Part of the 30S ribosomal subunit. Contacts proteins S8 and S17. May interact with IF1 in the 30S initiation complex.</text>
</comment>
<comment type="similarity">
    <text evidence="2">Belongs to the universal ribosomal protein uS12 family.</text>
</comment>